<comment type="catalytic activity">
    <reaction evidence="2">
        <text>S-adenosyl-L-methionine + a thiopurine = S-adenosyl-L-homocysteine + a thiopurine S-methylether.</text>
        <dbReference type="EC" id="2.1.1.67"/>
    </reaction>
</comment>
<comment type="subunit">
    <text evidence="2">Monomer.</text>
</comment>
<comment type="subcellular location">
    <subcellularLocation>
        <location>Cytoplasm</location>
    </subcellularLocation>
</comment>
<comment type="similarity">
    <text evidence="3">Belongs to the class I-like SAM-binding methyltransferase superfamily. TPMT family.</text>
</comment>
<accession>Q3BCR9</accession>
<name>TPMT_LYNRU</name>
<keyword id="KW-0007">Acetylation</keyword>
<keyword id="KW-0963">Cytoplasm</keyword>
<keyword id="KW-0489">Methyltransferase</keyword>
<keyword id="KW-0949">S-adenosyl-L-methionine</keyword>
<keyword id="KW-0808">Transferase</keyword>
<organism>
    <name type="scientific">Lynx rufus</name>
    <name type="common">Bobcat</name>
    <name type="synonym">Felis rufus</name>
    <dbReference type="NCBI Taxonomy" id="61384"/>
    <lineage>
        <taxon>Eukaryota</taxon>
        <taxon>Metazoa</taxon>
        <taxon>Chordata</taxon>
        <taxon>Craniata</taxon>
        <taxon>Vertebrata</taxon>
        <taxon>Euteleostomi</taxon>
        <taxon>Mammalia</taxon>
        <taxon>Eutheria</taxon>
        <taxon>Laurasiatheria</taxon>
        <taxon>Carnivora</taxon>
        <taxon>Feliformia</taxon>
        <taxon>Felidae</taxon>
        <taxon>Felinae</taxon>
        <taxon>Lynx</taxon>
    </lineage>
</organism>
<evidence type="ECO:0000250" key="1"/>
<evidence type="ECO:0000250" key="2">
    <source>
        <dbReference type="UniProtKB" id="P51580"/>
    </source>
</evidence>
<evidence type="ECO:0000305" key="3"/>
<reference key="1">
    <citation type="journal article" date="2005" name="Pharmacogenet. Genomics">
        <title>Thiopurine S-methyltransferase pharmacogenetics: variant allele functional and comparative genomics.</title>
        <authorList>
            <person name="Salavaggione O.E."/>
            <person name="Wang L."/>
            <person name="Wiepert M."/>
            <person name="Yee V.C."/>
            <person name="Weinshilboum R.M."/>
        </authorList>
    </citation>
    <scope>NUCLEOTIDE SEQUENCE [MRNA]</scope>
</reference>
<proteinExistence type="evidence at transcript level"/>
<sequence length="245" mass="28333">MDDTSTLIDVKEYPDTEVQKNRVLTLEEWREKWVDGKIGFHQEQGHQLLKKHLDTFLKGENVLRVFFPLCGKAVEMKWFADRGHCVVGVEISELGIREFFTEQNLSYSEEPIMEIPGAKVFKSSSGNISLYCCNLFDLPRVNIGKFDRIWDRGALVAVNPGDRKCYTDIMLSLTRKGFRYLLAVLSYDPTKHPGPPFYVPDAEIKNLFGSTCNIHCLEKVDVFEERHKSWGIDYIVEKLYLLTEK</sequence>
<gene>
    <name type="primary">TPMT</name>
</gene>
<feature type="chain" id="PRO_0000220104" description="Thiopurine S-methyltransferase">
    <location>
        <begin position="1"/>
        <end position="245"/>
    </location>
</feature>
<feature type="binding site" evidence="1">
    <location>
        <begin position="29"/>
        <end position="40"/>
    </location>
    <ligand>
        <name>S-adenosyl-L-methionine</name>
        <dbReference type="ChEBI" id="CHEBI:59789"/>
    </ligand>
</feature>
<feature type="binding site" evidence="1">
    <location>
        <position position="40"/>
    </location>
    <ligand>
        <name>substrate</name>
    </ligand>
</feature>
<feature type="binding site" evidence="1">
    <location>
        <position position="69"/>
    </location>
    <ligand>
        <name>S-adenosyl-L-methionine</name>
        <dbReference type="ChEBI" id="CHEBI:59789"/>
    </ligand>
</feature>
<feature type="binding site" evidence="1">
    <location>
        <position position="90"/>
    </location>
    <ligand>
        <name>S-adenosyl-L-methionine</name>
        <dbReference type="ChEBI" id="CHEBI:59789"/>
    </ligand>
</feature>
<feature type="binding site" evidence="1">
    <location>
        <position position="152"/>
    </location>
    <ligand>
        <name>S-adenosyl-L-methionine</name>
        <dbReference type="ChEBI" id="CHEBI:59789"/>
    </ligand>
</feature>
<feature type="modified residue" description="N6-acetyllysine" evidence="2">
    <location>
        <position position="58"/>
    </location>
</feature>
<protein>
    <recommendedName>
        <fullName>Thiopurine S-methyltransferase</fullName>
        <ecNumber>2.1.1.67</ecNumber>
    </recommendedName>
    <alternativeName>
        <fullName>Thiopurine methyltransferase</fullName>
    </alternativeName>
</protein>
<dbReference type="EC" id="2.1.1.67"/>
<dbReference type="EMBL" id="AY819776">
    <property type="protein sequence ID" value="AAX37638.1"/>
    <property type="molecule type" value="mRNA"/>
</dbReference>
<dbReference type="RefSeq" id="XP_046958815.1">
    <property type="nucleotide sequence ID" value="XM_047102859.1"/>
</dbReference>
<dbReference type="SMR" id="Q3BCR9"/>
<dbReference type="GeneID" id="124528976"/>
<dbReference type="GO" id="GO:0005737">
    <property type="term" value="C:cytoplasm"/>
    <property type="evidence" value="ECO:0007669"/>
    <property type="project" value="UniProtKB-SubCell"/>
</dbReference>
<dbReference type="GO" id="GO:0008119">
    <property type="term" value="F:thiopurine S-methyltransferase activity"/>
    <property type="evidence" value="ECO:0007669"/>
    <property type="project" value="UniProtKB-EC"/>
</dbReference>
<dbReference type="GO" id="GO:0032259">
    <property type="term" value="P:methylation"/>
    <property type="evidence" value="ECO:0007669"/>
    <property type="project" value="UniProtKB-KW"/>
</dbReference>
<dbReference type="FunFam" id="3.40.50.150:FF:000101">
    <property type="entry name" value="Thiopurine S-methyltransferase"/>
    <property type="match status" value="1"/>
</dbReference>
<dbReference type="Gene3D" id="3.40.50.150">
    <property type="entry name" value="Vaccinia Virus protein VP39"/>
    <property type="match status" value="1"/>
</dbReference>
<dbReference type="HAMAP" id="MF_00812">
    <property type="entry name" value="Thiopur_methtran"/>
    <property type="match status" value="1"/>
</dbReference>
<dbReference type="InterPro" id="IPR029063">
    <property type="entry name" value="SAM-dependent_MTases_sf"/>
</dbReference>
<dbReference type="InterPro" id="IPR025835">
    <property type="entry name" value="Thiopurine_S-MeTrfase"/>
</dbReference>
<dbReference type="InterPro" id="IPR008854">
    <property type="entry name" value="TPMT"/>
</dbReference>
<dbReference type="PANTHER" id="PTHR10259">
    <property type="entry name" value="THIOPURINE S-METHYLTRANSFERASE"/>
    <property type="match status" value="1"/>
</dbReference>
<dbReference type="PANTHER" id="PTHR10259:SF11">
    <property type="entry name" value="THIOPURINE S-METHYLTRANSFERASE"/>
    <property type="match status" value="1"/>
</dbReference>
<dbReference type="Pfam" id="PF05724">
    <property type="entry name" value="TPMT"/>
    <property type="match status" value="1"/>
</dbReference>
<dbReference type="PIRSF" id="PIRSF023956">
    <property type="entry name" value="Thiopurine_S-methyltransferase"/>
    <property type="match status" value="1"/>
</dbReference>
<dbReference type="SUPFAM" id="SSF53335">
    <property type="entry name" value="S-adenosyl-L-methionine-dependent methyltransferases"/>
    <property type="match status" value="1"/>
</dbReference>
<dbReference type="PROSITE" id="PS51585">
    <property type="entry name" value="SAM_MT_TPMT"/>
    <property type="match status" value="1"/>
</dbReference>